<reference key="1">
    <citation type="journal article" date="2004" name="Nat. Genet.">
        <title>Complete sequencing and characterization of 21,243 full-length human cDNAs.</title>
        <authorList>
            <person name="Ota T."/>
            <person name="Suzuki Y."/>
            <person name="Nishikawa T."/>
            <person name="Otsuki T."/>
            <person name="Sugiyama T."/>
            <person name="Irie R."/>
            <person name="Wakamatsu A."/>
            <person name="Hayashi K."/>
            <person name="Sato H."/>
            <person name="Nagai K."/>
            <person name="Kimura K."/>
            <person name="Makita H."/>
            <person name="Sekine M."/>
            <person name="Obayashi M."/>
            <person name="Nishi T."/>
            <person name="Shibahara T."/>
            <person name="Tanaka T."/>
            <person name="Ishii S."/>
            <person name="Yamamoto J."/>
            <person name="Saito K."/>
            <person name="Kawai Y."/>
            <person name="Isono Y."/>
            <person name="Nakamura Y."/>
            <person name="Nagahari K."/>
            <person name="Murakami K."/>
            <person name="Yasuda T."/>
            <person name="Iwayanagi T."/>
            <person name="Wagatsuma M."/>
            <person name="Shiratori A."/>
            <person name="Sudo H."/>
            <person name="Hosoiri T."/>
            <person name="Kaku Y."/>
            <person name="Kodaira H."/>
            <person name="Kondo H."/>
            <person name="Sugawara M."/>
            <person name="Takahashi M."/>
            <person name="Kanda K."/>
            <person name="Yokoi T."/>
            <person name="Furuya T."/>
            <person name="Kikkawa E."/>
            <person name="Omura Y."/>
            <person name="Abe K."/>
            <person name="Kamihara K."/>
            <person name="Katsuta N."/>
            <person name="Sato K."/>
            <person name="Tanikawa M."/>
            <person name="Yamazaki M."/>
            <person name="Ninomiya K."/>
            <person name="Ishibashi T."/>
            <person name="Yamashita H."/>
            <person name="Murakawa K."/>
            <person name="Fujimori K."/>
            <person name="Tanai H."/>
            <person name="Kimata M."/>
            <person name="Watanabe M."/>
            <person name="Hiraoka S."/>
            <person name="Chiba Y."/>
            <person name="Ishida S."/>
            <person name="Ono Y."/>
            <person name="Takiguchi S."/>
            <person name="Watanabe S."/>
            <person name="Yosida M."/>
            <person name="Hotuta T."/>
            <person name="Kusano J."/>
            <person name="Kanehori K."/>
            <person name="Takahashi-Fujii A."/>
            <person name="Hara H."/>
            <person name="Tanase T.-O."/>
            <person name="Nomura Y."/>
            <person name="Togiya S."/>
            <person name="Komai F."/>
            <person name="Hara R."/>
            <person name="Takeuchi K."/>
            <person name="Arita M."/>
            <person name="Imose N."/>
            <person name="Musashino K."/>
            <person name="Yuuki H."/>
            <person name="Oshima A."/>
            <person name="Sasaki N."/>
            <person name="Aotsuka S."/>
            <person name="Yoshikawa Y."/>
            <person name="Matsunawa H."/>
            <person name="Ichihara T."/>
            <person name="Shiohata N."/>
            <person name="Sano S."/>
            <person name="Moriya S."/>
            <person name="Momiyama H."/>
            <person name="Satoh N."/>
            <person name="Takami S."/>
            <person name="Terashima Y."/>
            <person name="Suzuki O."/>
            <person name="Nakagawa S."/>
            <person name="Senoh A."/>
            <person name="Mizoguchi H."/>
            <person name="Goto Y."/>
            <person name="Shimizu F."/>
            <person name="Wakebe H."/>
            <person name="Hishigaki H."/>
            <person name="Watanabe T."/>
            <person name="Sugiyama A."/>
            <person name="Takemoto M."/>
            <person name="Kawakami B."/>
            <person name="Yamazaki M."/>
            <person name="Watanabe K."/>
            <person name="Kumagai A."/>
            <person name="Itakura S."/>
            <person name="Fukuzumi Y."/>
            <person name="Fujimori Y."/>
            <person name="Komiyama M."/>
            <person name="Tashiro H."/>
            <person name="Tanigami A."/>
            <person name="Fujiwara T."/>
            <person name="Ono T."/>
            <person name="Yamada K."/>
            <person name="Fujii Y."/>
            <person name="Ozaki K."/>
            <person name="Hirao M."/>
            <person name="Ohmori Y."/>
            <person name="Kawabata A."/>
            <person name="Hikiji T."/>
            <person name="Kobatake N."/>
            <person name="Inagaki H."/>
            <person name="Ikema Y."/>
            <person name="Okamoto S."/>
            <person name="Okitani R."/>
            <person name="Kawakami T."/>
            <person name="Noguchi S."/>
            <person name="Itoh T."/>
            <person name="Shigeta K."/>
            <person name="Senba T."/>
            <person name="Matsumura K."/>
            <person name="Nakajima Y."/>
            <person name="Mizuno T."/>
            <person name="Morinaga M."/>
            <person name="Sasaki M."/>
            <person name="Togashi T."/>
            <person name="Oyama M."/>
            <person name="Hata H."/>
            <person name="Watanabe M."/>
            <person name="Komatsu T."/>
            <person name="Mizushima-Sugano J."/>
            <person name="Satoh T."/>
            <person name="Shirai Y."/>
            <person name="Takahashi Y."/>
            <person name="Nakagawa K."/>
            <person name="Okumura K."/>
            <person name="Nagase T."/>
            <person name="Nomura N."/>
            <person name="Kikuchi H."/>
            <person name="Masuho Y."/>
            <person name="Yamashita R."/>
            <person name="Nakai K."/>
            <person name="Yada T."/>
            <person name="Nakamura Y."/>
            <person name="Ohara O."/>
            <person name="Isogai T."/>
            <person name="Sugano S."/>
        </authorList>
    </citation>
    <scope>NUCLEOTIDE SEQUENCE [LARGE SCALE MRNA] (ISOFORMS 2 AND 3)</scope>
    <scope>VARIANT GLY-84</scope>
    <source>
        <tissue>Brain</tissue>
        <tissue>Small intestine</tissue>
        <tissue>Testis</tissue>
    </source>
</reference>
<reference key="2">
    <citation type="journal article" date="2007" name="BMC Genomics">
        <title>The full-ORF clone resource of the German cDNA consortium.</title>
        <authorList>
            <person name="Bechtel S."/>
            <person name="Rosenfelder H."/>
            <person name="Duda A."/>
            <person name="Schmidt C.P."/>
            <person name="Ernst U."/>
            <person name="Wellenreuther R."/>
            <person name="Mehrle A."/>
            <person name="Schuster C."/>
            <person name="Bahr A."/>
            <person name="Bloecker H."/>
            <person name="Heubner D."/>
            <person name="Hoerlein A."/>
            <person name="Michel G."/>
            <person name="Wedler H."/>
            <person name="Koehrer K."/>
            <person name="Ottenwaelder B."/>
            <person name="Poustka A."/>
            <person name="Wiemann S."/>
            <person name="Schupp I."/>
        </authorList>
    </citation>
    <scope>NUCLEOTIDE SEQUENCE [LARGE SCALE MRNA] (ISOFORM 3)</scope>
    <scope>VARIANT GLY-84</scope>
    <source>
        <tissue>Fetal kidney</tissue>
    </source>
</reference>
<reference key="3">
    <citation type="journal article" date="2005" name="Nature">
        <title>The DNA sequence of the human X chromosome.</title>
        <authorList>
            <person name="Ross M.T."/>
            <person name="Grafham D.V."/>
            <person name="Coffey A.J."/>
            <person name="Scherer S."/>
            <person name="McLay K."/>
            <person name="Muzny D."/>
            <person name="Platzer M."/>
            <person name="Howell G.R."/>
            <person name="Burrows C."/>
            <person name="Bird C.P."/>
            <person name="Frankish A."/>
            <person name="Lovell F.L."/>
            <person name="Howe K.L."/>
            <person name="Ashurst J.L."/>
            <person name="Fulton R.S."/>
            <person name="Sudbrak R."/>
            <person name="Wen G."/>
            <person name="Jones M.C."/>
            <person name="Hurles M.E."/>
            <person name="Andrews T.D."/>
            <person name="Scott C.E."/>
            <person name="Searle S."/>
            <person name="Ramser J."/>
            <person name="Whittaker A."/>
            <person name="Deadman R."/>
            <person name="Carter N.P."/>
            <person name="Hunt S.E."/>
            <person name="Chen R."/>
            <person name="Cree A."/>
            <person name="Gunaratne P."/>
            <person name="Havlak P."/>
            <person name="Hodgson A."/>
            <person name="Metzker M.L."/>
            <person name="Richards S."/>
            <person name="Scott G."/>
            <person name="Steffen D."/>
            <person name="Sodergren E."/>
            <person name="Wheeler D.A."/>
            <person name="Worley K.C."/>
            <person name="Ainscough R."/>
            <person name="Ambrose K.D."/>
            <person name="Ansari-Lari M.A."/>
            <person name="Aradhya S."/>
            <person name="Ashwell R.I."/>
            <person name="Babbage A.K."/>
            <person name="Bagguley C.L."/>
            <person name="Ballabio A."/>
            <person name="Banerjee R."/>
            <person name="Barker G.E."/>
            <person name="Barlow K.F."/>
            <person name="Barrett I.P."/>
            <person name="Bates K.N."/>
            <person name="Beare D.M."/>
            <person name="Beasley H."/>
            <person name="Beasley O."/>
            <person name="Beck A."/>
            <person name="Bethel G."/>
            <person name="Blechschmidt K."/>
            <person name="Brady N."/>
            <person name="Bray-Allen S."/>
            <person name="Bridgeman A.M."/>
            <person name="Brown A.J."/>
            <person name="Brown M.J."/>
            <person name="Bonnin D."/>
            <person name="Bruford E.A."/>
            <person name="Buhay C."/>
            <person name="Burch P."/>
            <person name="Burford D."/>
            <person name="Burgess J."/>
            <person name="Burrill W."/>
            <person name="Burton J."/>
            <person name="Bye J.M."/>
            <person name="Carder C."/>
            <person name="Carrel L."/>
            <person name="Chako J."/>
            <person name="Chapman J.C."/>
            <person name="Chavez D."/>
            <person name="Chen E."/>
            <person name="Chen G."/>
            <person name="Chen Y."/>
            <person name="Chen Z."/>
            <person name="Chinault C."/>
            <person name="Ciccodicola A."/>
            <person name="Clark S.Y."/>
            <person name="Clarke G."/>
            <person name="Clee C.M."/>
            <person name="Clegg S."/>
            <person name="Clerc-Blankenburg K."/>
            <person name="Clifford K."/>
            <person name="Cobley V."/>
            <person name="Cole C.G."/>
            <person name="Conquer J.S."/>
            <person name="Corby N."/>
            <person name="Connor R.E."/>
            <person name="David R."/>
            <person name="Davies J."/>
            <person name="Davis C."/>
            <person name="Davis J."/>
            <person name="Delgado O."/>
            <person name="Deshazo D."/>
            <person name="Dhami P."/>
            <person name="Ding Y."/>
            <person name="Dinh H."/>
            <person name="Dodsworth S."/>
            <person name="Draper H."/>
            <person name="Dugan-Rocha S."/>
            <person name="Dunham A."/>
            <person name="Dunn M."/>
            <person name="Durbin K.J."/>
            <person name="Dutta I."/>
            <person name="Eades T."/>
            <person name="Ellwood M."/>
            <person name="Emery-Cohen A."/>
            <person name="Errington H."/>
            <person name="Evans K.L."/>
            <person name="Faulkner L."/>
            <person name="Francis F."/>
            <person name="Frankland J."/>
            <person name="Fraser A.E."/>
            <person name="Galgoczy P."/>
            <person name="Gilbert J."/>
            <person name="Gill R."/>
            <person name="Gloeckner G."/>
            <person name="Gregory S.G."/>
            <person name="Gribble S."/>
            <person name="Griffiths C."/>
            <person name="Grocock R."/>
            <person name="Gu Y."/>
            <person name="Gwilliam R."/>
            <person name="Hamilton C."/>
            <person name="Hart E.A."/>
            <person name="Hawes A."/>
            <person name="Heath P.D."/>
            <person name="Heitmann K."/>
            <person name="Hennig S."/>
            <person name="Hernandez J."/>
            <person name="Hinzmann B."/>
            <person name="Ho S."/>
            <person name="Hoffs M."/>
            <person name="Howden P.J."/>
            <person name="Huckle E.J."/>
            <person name="Hume J."/>
            <person name="Hunt P.J."/>
            <person name="Hunt A.R."/>
            <person name="Isherwood J."/>
            <person name="Jacob L."/>
            <person name="Johnson D."/>
            <person name="Jones S."/>
            <person name="de Jong P.J."/>
            <person name="Joseph S.S."/>
            <person name="Keenan S."/>
            <person name="Kelly S."/>
            <person name="Kershaw J.K."/>
            <person name="Khan Z."/>
            <person name="Kioschis P."/>
            <person name="Klages S."/>
            <person name="Knights A.J."/>
            <person name="Kosiura A."/>
            <person name="Kovar-Smith C."/>
            <person name="Laird G.K."/>
            <person name="Langford C."/>
            <person name="Lawlor S."/>
            <person name="Leversha M."/>
            <person name="Lewis L."/>
            <person name="Liu W."/>
            <person name="Lloyd C."/>
            <person name="Lloyd D.M."/>
            <person name="Loulseged H."/>
            <person name="Loveland J.E."/>
            <person name="Lovell J.D."/>
            <person name="Lozado R."/>
            <person name="Lu J."/>
            <person name="Lyne R."/>
            <person name="Ma J."/>
            <person name="Maheshwari M."/>
            <person name="Matthews L.H."/>
            <person name="McDowall J."/>
            <person name="McLaren S."/>
            <person name="McMurray A."/>
            <person name="Meidl P."/>
            <person name="Meitinger T."/>
            <person name="Milne S."/>
            <person name="Miner G."/>
            <person name="Mistry S.L."/>
            <person name="Morgan M."/>
            <person name="Morris S."/>
            <person name="Mueller I."/>
            <person name="Mullikin J.C."/>
            <person name="Nguyen N."/>
            <person name="Nordsiek G."/>
            <person name="Nyakatura G."/>
            <person name="O'dell C.N."/>
            <person name="Okwuonu G."/>
            <person name="Palmer S."/>
            <person name="Pandian R."/>
            <person name="Parker D."/>
            <person name="Parrish J."/>
            <person name="Pasternak S."/>
            <person name="Patel D."/>
            <person name="Pearce A.V."/>
            <person name="Pearson D.M."/>
            <person name="Pelan S.E."/>
            <person name="Perez L."/>
            <person name="Porter K.M."/>
            <person name="Ramsey Y."/>
            <person name="Reichwald K."/>
            <person name="Rhodes S."/>
            <person name="Ridler K.A."/>
            <person name="Schlessinger D."/>
            <person name="Schueler M.G."/>
            <person name="Sehra H.K."/>
            <person name="Shaw-Smith C."/>
            <person name="Shen H."/>
            <person name="Sheridan E.M."/>
            <person name="Shownkeen R."/>
            <person name="Skuce C.D."/>
            <person name="Smith M.L."/>
            <person name="Sotheran E.C."/>
            <person name="Steingruber H.E."/>
            <person name="Steward C.A."/>
            <person name="Storey R."/>
            <person name="Swann R.M."/>
            <person name="Swarbreck D."/>
            <person name="Tabor P.E."/>
            <person name="Taudien S."/>
            <person name="Taylor T."/>
            <person name="Teague B."/>
            <person name="Thomas K."/>
            <person name="Thorpe A."/>
            <person name="Timms K."/>
            <person name="Tracey A."/>
            <person name="Trevanion S."/>
            <person name="Tromans A.C."/>
            <person name="d'Urso M."/>
            <person name="Verduzco D."/>
            <person name="Villasana D."/>
            <person name="Waldron L."/>
            <person name="Wall M."/>
            <person name="Wang Q."/>
            <person name="Warren J."/>
            <person name="Warry G.L."/>
            <person name="Wei X."/>
            <person name="West A."/>
            <person name="Whitehead S.L."/>
            <person name="Whiteley M.N."/>
            <person name="Wilkinson J.E."/>
            <person name="Willey D.L."/>
            <person name="Williams G."/>
            <person name="Williams L."/>
            <person name="Williamson A."/>
            <person name="Williamson H."/>
            <person name="Wilming L."/>
            <person name="Woodmansey R.L."/>
            <person name="Wray P.W."/>
            <person name="Yen J."/>
            <person name="Zhang J."/>
            <person name="Zhou J."/>
            <person name="Zoghbi H."/>
            <person name="Zorilla S."/>
            <person name="Buck D."/>
            <person name="Reinhardt R."/>
            <person name="Poustka A."/>
            <person name="Rosenthal A."/>
            <person name="Lehrach H."/>
            <person name="Meindl A."/>
            <person name="Minx P.J."/>
            <person name="Hillier L.W."/>
            <person name="Willard H.F."/>
            <person name="Wilson R.K."/>
            <person name="Waterston R.H."/>
            <person name="Rice C.M."/>
            <person name="Vaudin M."/>
            <person name="Coulson A."/>
            <person name="Nelson D.L."/>
            <person name="Weinstock G."/>
            <person name="Sulston J.E."/>
            <person name="Durbin R.M."/>
            <person name="Hubbard T."/>
            <person name="Gibbs R.A."/>
            <person name="Beck S."/>
            <person name="Rogers J."/>
            <person name="Bentley D.R."/>
        </authorList>
    </citation>
    <scope>NUCLEOTIDE SEQUENCE [LARGE SCALE GENOMIC DNA]</scope>
</reference>
<reference key="4">
    <citation type="submission" date="2005-07" db="EMBL/GenBank/DDBJ databases">
        <authorList>
            <person name="Mural R.J."/>
            <person name="Istrail S."/>
            <person name="Sutton G.G."/>
            <person name="Florea L."/>
            <person name="Halpern A.L."/>
            <person name="Mobarry C.M."/>
            <person name="Lippert R."/>
            <person name="Walenz B."/>
            <person name="Shatkay H."/>
            <person name="Dew I."/>
            <person name="Miller J.R."/>
            <person name="Flanigan M.J."/>
            <person name="Edwards N.J."/>
            <person name="Bolanos R."/>
            <person name="Fasulo D."/>
            <person name="Halldorsson B.V."/>
            <person name="Hannenhalli S."/>
            <person name="Turner R."/>
            <person name="Yooseph S."/>
            <person name="Lu F."/>
            <person name="Nusskern D.R."/>
            <person name="Shue B.C."/>
            <person name="Zheng X.H."/>
            <person name="Zhong F."/>
            <person name="Delcher A.L."/>
            <person name="Huson D.H."/>
            <person name="Kravitz S.A."/>
            <person name="Mouchard L."/>
            <person name="Reinert K."/>
            <person name="Remington K.A."/>
            <person name="Clark A.G."/>
            <person name="Waterman M.S."/>
            <person name="Eichler E.E."/>
            <person name="Adams M.D."/>
            <person name="Hunkapiller M.W."/>
            <person name="Myers E.W."/>
            <person name="Venter J.C."/>
        </authorList>
    </citation>
    <scope>NUCLEOTIDE SEQUENCE [LARGE SCALE GENOMIC DNA]</scope>
</reference>
<feature type="chain" id="PRO_0000191370" description="Armadillo repeat-containing X-linked protein 4">
    <location>
        <begin position="1"/>
        <end position="2290"/>
    </location>
</feature>
<feature type="transmembrane region" description="Helical" evidence="1">
    <location>
        <begin position="7"/>
        <end position="24"/>
    </location>
</feature>
<feature type="repeat" description="ARM 1" evidence="1">
    <location>
        <begin position="2031"/>
        <end position="2071"/>
    </location>
</feature>
<feature type="repeat" description="ARM 2" evidence="1">
    <location>
        <begin position="2073"/>
        <end position="2112"/>
    </location>
</feature>
<feature type="repeat" description="ARM 3" evidence="1">
    <location>
        <begin position="2153"/>
        <end position="2192"/>
    </location>
</feature>
<feature type="repeat" description="ARM 4" evidence="1">
    <location>
        <begin position="2194"/>
        <end position="2234"/>
    </location>
</feature>
<feature type="region of interest" description="Disordered" evidence="2">
    <location>
        <begin position="517"/>
        <end position="549"/>
    </location>
</feature>
<feature type="region of interest" description="Disordered" evidence="2">
    <location>
        <begin position="564"/>
        <end position="583"/>
    </location>
</feature>
<feature type="region of interest" description="Disordered" evidence="2">
    <location>
        <begin position="967"/>
        <end position="988"/>
    </location>
</feature>
<feature type="region of interest" description="Disordered" evidence="2">
    <location>
        <begin position="1014"/>
        <end position="1087"/>
    </location>
</feature>
<feature type="region of interest" description="Disordered" evidence="2">
    <location>
        <begin position="1302"/>
        <end position="1430"/>
    </location>
</feature>
<feature type="region of interest" description="Disordered" evidence="2">
    <location>
        <begin position="1521"/>
        <end position="1715"/>
    </location>
</feature>
<feature type="region of interest" description="Disordered" evidence="2">
    <location>
        <begin position="1911"/>
        <end position="1931"/>
    </location>
</feature>
<feature type="region of interest" description="Disordered" evidence="2">
    <location>
        <begin position="1954"/>
        <end position="1973"/>
    </location>
</feature>
<feature type="compositionally biased region" description="Basic residues" evidence="2">
    <location>
        <begin position="526"/>
        <end position="536"/>
    </location>
</feature>
<feature type="compositionally biased region" description="Polar residues" evidence="2">
    <location>
        <begin position="1073"/>
        <end position="1087"/>
    </location>
</feature>
<feature type="compositionally biased region" description="Gly residues" evidence="2">
    <location>
        <begin position="1328"/>
        <end position="1341"/>
    </location>
</feature>
<feature type="compositionally biased region" description="Gly residues" evidence="2">
    <location>
        <begin position="1403"/>
        <end position="1414"/>
    </location>
</feature>
<feature type="compositionally biased region" description="Polar residues" evidence="2">
    <location>
        <begin position="1419"/>
        <end position="1430"/>
    </location>
</feature>
<feature type="compositionally biased region" description="Gly residues" evidence="2">
    <location>
        <begin position="1521"/>
        <end position="1535"/>
    </location>
</feature>
<feature type="compositionally biased region" description="Polar residues" evidence="2">
    <location>
        <begin position="1537"/>
        <end position="1558"/>
    </location>
</feature>
<feature type="compositionally biased region" description="Gly residues" evidence="2">
    <location>
        <begin position="1581"/>
        <end position="1598"/>
    </location>
</feature>
<feature type="compositionally biased region" description="Gly residues" evidence="2">
    <location>
        <begin position="1609"/>
        <end position="1623"/>
    </location>
</feature>
<feature type="compositionally biased region" description="Polar residues" evidence="2">
    <location>
        <begin position="1628"/>
        <end position="1645"/>
    </location>
</feature>
<feature type="compositionally biased region" description="Low complexity" evidence="2">
    <location>
        <begin position="1674"/>
        <end position="1687"/>
    </location>
</feature>
<feature type="splice variant" id="VSP_060248" description="In isoform 2.">
    <original>M</original>
    <variation>MSAAGLKITGSKETKRRLLLISIDWVYCQEKQEERRELPRIITGPPPEAAVVAFEWLKTSTLTGLHPQLPLSLPQPECALPYLVRAFSRGDYM</variation>
    <location>
        <position position="1"/>
    </location>
</feature>
<feature type="splice variant" id="VSP_060249" description="In isoform 3.">
    <original>M</original>
    <variation>MSAAGLKITGSKETKRRLLLISIDWSRDLMNLCIYFRVYCQEKQEERRELPRIITGPPPEAAVVAFEWLKTSTLTGLHPQLPLSLPQPECALPYLVRAFSRGDYM</variation>
    <location>
        <position position="1"/>
    </location>
</feature>
<feature type="splice variant" id="VSP_060250" description="In isoform 2 and isoform 3.">
    <original>SVAKTQSEARPGA</original>
    <variation>LIPRAFPSKNASC</variation>
    <location>
        <begin position="244"/>
        <end position="256"/>
    </location>
</feature>
<feature type="splice variant" id="VSP_060251" description="In isoform 2 and isoform 3.">
    <location>
        <begin position="257"/>
        <end position="2290"/>
    </location>
</feature>
<feature type="sequence variant" id="VAR_024761" description="In dbSNP:rs5951332." evidence="3 4">
    <original>R</original>
    <variation>G</variation>
    <location>
        <position position="84"/>
    </location>
</feature>
<feature type="sequence conflict" description="In Ref. 1; BAC04910." evidence="5" ref="1">
    <original>N</original>
    <variation>D</variation>
    <location sequence="Q5H9R4-2">
        <position position="345"/>
    </location>
</feature>
<feature type="sequence conflict" description="In Ref. 2; CAI45960." evidence="5" ref="2">
    <original>P</original>
    <variation>R</variation>
    <location sequence="Q5H9R4-3">
        <position position="82"/>
    </location>
</feature>
<feature type="sequence conflict" description="In Ref. 2; CAI45960." evidence="5" ref="2">
    <original>S</original>
    <variation>C</variation>
    <location sequence="Q5H9R4-3">
        <position position="84"/>
    </location>
</feature>
<protein>
    <recommendedName>
        <fullName>Armadillo repeat-containing X-linked protein 4</fullName>
    </recommendedName>
</protein>
<comment type="interaction">
    <interactant intactId="EBI-21899904">
        <id>Q5H9R4-2</id>
    </interactant>
    <interactant intactId="EBI-11954292">
        <id>Q86V38</id>
        <label>ATN1</label>
    </interactant>
    <organismsDiffer>false</organismsDiffer>
    <experiments>3</experiments>
</comment>
<comment type="interaction">
    <interactant intactId="EBI-21899904">
        <id>Q5H9R4-2</id>
    </interactant>
    <interactant intactId="EBI-2432309">
        <id>Q92876</id>
        <label>KLK6</label>
    </interactant>
    <organismsDiffer>false</organismsDiffer>
    <experiments>3</experiments>
</comment>
<comment type="subcellular location">
    <subcellularLocation>
        <location evidence="1">Membrane</location>
        <topology evidence="1">Single-pass membrane protein</topology>
    </subcellularLocation>
</comment>
<comment type="alternative products">
    <event type="alternative splicing"/>
    <isoform>
        <id>Q5H9R4-1</id>
        <name>1</name>
        <sequence type="displayed"/>
    </isoform>
    <isoform>
        <id>Q5H9R4-2</id>
        <name>2</name>
        <sequence type="described" ref="VSP_060248 VSP_060250 VSP_060251"/>
    </isoform>
    <isoform>
        <id>Q5H9R4-3</id>
        <name>3</name>
        <sequence type="described" ref="VSP_060249 VSP_060250 VSP_060251"/>
    </isoform>
</comment>
<comment type="miscellaneous">
    <molecule>Isoform 2</molecule>
    <text evidence="5">May be produced at very low levels due to a premature stop codon in the mRNA, leading to nonsense-mediated mRNA decay.</text>
</comment>
<comment type="miscellaneous">
    <molecule>Isoform 3</molecule>
    <text evidence="5">May be produced at very low levels due to a premature stop codon in the mRNA, leading to nonsense-mediated mRNA decay.</text>
</comment>
<comment type="similarity">
    <text evidence="5">Belongs to the eutherian X-chromosome-specific Armcx family.</text>
</comment>
<sequence>MGRIQEVGWVTAGLVIWAGTCYYIYKFTKGRAQSVRTLARNGSTVKMETVVGVQSQTLAINEAEIKTKPQVEIGAETGARSGPRAEVETKATAIAIHRANSQAKAMVGAEPETQSESKVVAGTLVMTEAVTLTEVKAKAREVAMKEAVTQTDAEAGKIVKKEAVTQTKAKAWALVAKTEAKREAMTQTKAETHILAEKETEINRVMVTQSETLAVPREVAKMGATNKTGIVDETKTRALEETVSVAKTQSEARPGATVDARGNPNGMSREVAGVDMKSCAQSQAVTKIQGDDMPGTGVEDMGNCKTMSRAESGADTRASAQPQIFAKTQTEAIPGAKIDAGGNTNAMCKVGAGADVRACIQPQTVAKKQAEVTSGARVDGRGNTNVISKAITGADMRAAAQPQAVASTHAEAMSDAKVKNRGNPNAMTKAGAKANLRANSQVEALPDARDKSRGNPNVMAKVGDGTDMLSCTQPQLVASVQADTLSDGKIKVRGNVNTMPKEGAGVDMKAQGMAQSQGEALPNTRGKARGKAKAKCKTGPGMDMKTCTQPQAGVKTPAEALLDSRVDGRGNPNATSKAGTKADQRVCGQPLVVANPQGEALPGAKNKVKGNPHTVLKVGAGEGTTDSAQPEAVVSFQGEALLGTKNKVKGNPNVVLKAEVGEGAMGTAQLQIMASSKGEALLDSKNKVKGNSNAVSKAGAGTDTTGSVQPQIVANSQGEVLPGAKNKIRGNPTTVPNSGVGPYTTDSARLQAVANSQGEVLPGAKNKVKANLNAVSKAEAGMGATGSVQPQAVANSHCETLPGAKNKVRGNWNAVSKAGAGMDTRGSAQPQAVANSQGEVLPGAKNKVKGNPNVVSKAGAREDTVGSTQPQVLASSQRETLPGARNKVKGNSNVVSKAGAREDTMGSAQPQVVANSQRETLPGARNKVKGNSNAISKAEAGAGIMGSVQVQVVASFQGEVLPGAKNKVRGNSNAVPKAEAGADTVGSAQPQAVANSQSETLLGARNKVKGNTIAVPKAGTGAGTRHSAQPQIVAGSQGETLPGARDKSMSTSEAEATAEDEAYAKPEAEAMPTSESEGGSGTQACRKTQPNIHDYYWNGIGVEDWIAAERWIKFRFQTMDGDWENSVSWADDENEASIGSWSGASDKAGIIRSWAVACDETSVKSWAGARAENVVGIGTWARAGEQASGGLWAGGQTSEGTWAGDKASGGAWTGAENQASGGSWALAGNQAIGELWAAGQASDGSWPGGQASGVSWVGEEAIGGSWTGAENQASEGSWAGAGAGNMSSVSYWAGVVDQAGGGSWAGTSDQSGGGSKPRFEDQASGEGSWAGAGGQASGGSMLGPEDQSSGRSWADTADQASGGSRLGHVDQSSGGAWAGTLDQSGGGSKPRFENQTTEEGSWAGAGGQAGGGSKVGPEDQSSGRSWANSGDQISGGFLVGIVDQANGGSWTGAGHPASVGPKPIFEDQVSGRGSWADAREQVVGDSRLGLRDQSSGDSWAGTGDQASGWFCVCPGSQTNGGSWGGASGQDVGGSRPGPTNQSSAGSWDSPGSQVSGSCWTGAGAVDQAGGCSKPGFEDQAIGGGFWPGAGDQTGGGSRPGSEDQSSGIGSWGVAGGQVLGGARPGPADQSSGGSWAGTGNQSSGRSWIGPGDQAVDCSKPEFEDQACGGGSWAGAGSQASGESWAGSRPGNEAIGGSRMGSEDQATGGSWARSEDQASGRFQVSFEVEANEGFWFGPGAEAVIGSWCWTEEKADIVSRPDDKDEATTASRSGAGEEAMICSRIEAENKASSGSWIRSEEVAYMGSCVGAEAGAGAEAGAGAEAGAGAGAEAGAEAGAGAGAGPGTESGAGIWSWDGDATTVESRLGAGEEAGVESWTLARNVGEDELSRESSPDIEEISLRSLFWAESENSNTFRSKSGKDASFESGAGDNTSIKDKFEAAGGVDIGSWFCAGNENTSEDKSAPKAKAKKSSESRGIYPYMVPGAGMGSWDGAMIWSETKFAHQSEASFPVEDESRKQTRTGEKTRPWSCRCKHEANMDPRDLEKLICMIEMTEDPSVHEIANNALYNSADYSYSHEVVRNVGGISVIESLLNNPYPSVRQKALNALNNISVAAENHRKVKTYLNQVCEDTVTYPLNSNVQLAGLRLIRHLTITSEYQHMVTNYISEFLRLLTVGSGETKDHVLGMLLNFSKNPSMTKDLLIANAPTSLINIFSKKETKENILNALSLFENINYHFKRRAKAFTQDKFSKNSLYFLFQRPKACAKKLRALAAECNDPEVKERVELLISKL</sequence>
<keyword id="KW-0025">Alternative splicing</keyword>
<keyword id="KW-0472">Membrane</keyword>
<keyword id="KW-1267">Proteomics identification</keyword>
<keyword id="KW-1185">Reference proteome</keyword>
<keyword id="KW-0677">Repeat</keyword>
<keyword id="KW-0812">Transmembrane</keyword>
<keyword id="KW-1133">Transmembrane helix</keyword>
<evidence type="ECO:0000255" key="1"/>
<evidence type="ECO:0000256" key="2">
    <source>
        <dbReference type="SAM" id="MobiDB-lite"/>
    </source>
</evidence>
<evidence type="ECO:0000269" key="3">
    <source>
    </source>
</evidence>
<evidence type="ECO:0000269" key="4">
    <source>
    </source>
</evidence>
<evidence type="ECO:0000305" key="5"/>
<dbReference type="EMBL" id="AK096955">
    <property type="protein sequence ID" value="BAC04910.1"/>
    <property type="molecule type" value="mRNA"/>
</dbReference>
<dbReference type="EMBL" id="AK126987">
    <property type="protein sequence ID" value="BAG54416.1"/>
    <property type="molecule type" value="mRNA"/>
</dbReference>
<dbReference type="EMBL" id="AK292543">
    <property type="protein sequence ID" value="BAF85232.1"/>
    <property type="molecule type" value="mRNA"/>
</dbReference>
<dbReference type="EMBL" id="CR933662">
    <property type="protein sequence ID" value="CAI45960.1"/>
    <property type="molecule type" value="mRNA"/>
</dbReference>
<dbReference type="EMBL" id="AL035422">
    <property type="status" value="NOT_ANNOTATED_CDS"/>
    <property type="molecule type" value="Genomic_DNA"/>
</dbReference>
<dbReference type="EMBL" id="KF459251">
    <property type="status" value="NOT_ANNOTATED_CDS"/>
    <property type="molecule type" value="Genomic_DNA"/>
</dbReference>
<dbReference type="EMBL" id="KF459256">
    <property type="status" value="NOT_ANNOTATED_CDS"/>
    <property type="molecule type" value="Genomic_DNA"/>
</dbReference>
<dbReference type="EMBL" id="KF459252">
    <property type="status" value="NOT_ANNOTATED_CDS"/>
    <property type="molecule type" value="Genomic_DNA"/>
</dbReference>
<dbReference type="EMBL" id="KF510605">
    <property type="status" value="NOT_ANNOTATED_CDS"/>
    <property type="molecule type" value="Genomic_DNA"/>
</dbReference>
<dbReference type="EMBL" id="Z68873">
    <property type="status" value="NOT_ANNOTATED_CDS"/>
    <property type="molecule type" value="Genomic_DNA"/>
</dbReference>
<dbReference type="EMBL" id="Z69838">
    <property type="status" value="NOT_ANNOTATED_CDS"/>
    <property type="molecule type" value="Genomic_DNA"/>
</dbReference>
<dbReference type="EMBL" id="CH471115">
    <property type="protein sequence ID" value="EAX02869.1"/>
    <property type="molecule type" value="Genomic_DNA"/>
</dbReference>
<dbReference type="CCDS" id="CCDS59170.1">
    <molecule id="Q5H9R4-1"/>
</dbReference>
<dbReference type="RefSeq" id="NP_001243084.2">
    <molecule id="Q5H9R4-1"/>
    <property type="nucleotide sequence ID" value="NM_001256155.3"/>
</dbReference>
<dbReference type="SMR" id="Q5H9R4"/>
<dbReference type="FunCoup" id="Q5H9R4">
    <property type="interactions" value="16"/>
</dbReference>
<dbReference type="IntAct" id="Q5H9R4">
    <property type="interactions" value="6"/>
</dbReference>
<dbReference type="STRING" id="9606.ENSP00000404304"/>
<dbReference type="GlyCosmos" id="Q5H9R4">
    <property type="glycosylation" value="1 site, 1 glycan"/>
</dbReference>
<dbReference type="GlyGen" id="Q5H9R4">
    <property type="glycosylation" value="2 sites, 1 O-linked glycan (2 sites)"/>
</dbReference>
<dbReference type="iPTMnet" id="Q5H9R4"/>
<dbReference type="PhosphoSitePlus" id="Q5H9R4"/>
<dbReference type="BioMuta" id="ARMCX4"/>
<dbReference type="DMDM" id="84027758"/>
<dbReference type="jPOST" id="Q5H9R4"/>
<dbReference type="MassIVE" id="Q5H9R4"/>
<dbReference type="PaxDb" id="9606-ENSP00000404304"/>
<dbReference type="PeptideAtlas" id="Q5H9R4"/>
<dbReference type="ProteomicsDB" id="30227"/>
<dbReference type="ProteomicsDB" id="62901">
    <molecule id="Q5H9R4-1"/>
</dbReference>
<dbReference type="ProteomicsDB" id="62902">
    <molecule id="Q5H9R4-2"/>
</dbReference>
<dbReference type="Pumba" id="Q5H9R4"/>
<dbReference type="Antibodypedia" id="431">
    <property type="antibodies" value="51 antibodies from 9 providers"/>
</dbReference>
<dbReference type="DNASU" id="100131755"/>
<dbReference type="Ensembl" id="ENST00000423738.5">
    <molecule id="Q5H9R4-1"/>
    <property type="protein sequence ID" value="ENSP00000404304.3"/>
    <property type="gene ID" value="ENSG00000196440.12"/>
</dbReference>
<dbReference type="GeneID" id="100131755"/>
<dbReference type="KEGG" id="hsa:100131755"/>
<dbReference type="MANE-Select" id="ENST00000423738.5">
    <property type="protein sequence ID" value="ENSP00000404304.3"/>
    <property type="RefSeq nucleotide sequence ID" value="NM_001256155.3"/>
    <property type="RefSeq protein sequence ID" value="NP_001243084.2"/>
</dbReference>
<dbReference type="UCSC" id="uc065ahn.1">
    <molecule id="Q5H9R4-1"/>
    <property type="organism name" value="human"/>
</dbReference>
<dbReference type="AGR" id="HGNC:28615"/>
<dbReference type="CTD" id="100131755"/>
<dbReference type="DisGeNET" id="100131755"/>
<dbReference type="GeneCards" id="ARMCX4"/>
<dbReference type="HGNC" id="HGNC:28615">
    <property type="gene designation" value="ARMCX4"/>
</dbReference>
<dbReference type="HPA" id="ENSG00000196440">
    <property type="expression patterns" value="Low tissue specificity"/>
</dbReference>
<dbReference type="MIM" id="301046">
    <property type="type" value="gene"/>
</dbReference>
<dbReference type="neXtProt" id="NX_Q5H9R4"/>
<dbReference type="OpenTargets" id="ENSG00000196440"/>
<dbReference type="VEuPathDB" id="HostDB:ENSG00000196440"/>
<dbReference type="eggNOG" id="ENOG502SDV3">
    <property type="taxonomic scope" value="Eukaryota"/>
</dbReference>
<dbReference type="GeneTree" id="ENSGT00940000162587"/>
<dbReference type="HOGENOM" id="CLU_065826_0_0_1"/>
<dbReference type="InParanoid" id="Q5H9R4"/>
<dbReference type="OMA" id="KIGHHGL"/>
<dbReference type="OrthoDB" id="9837216at2759"/>
<dbReference type="PAN-GO" id="Q5H9R4">
    <property type="GO annotations" value="0 GO annotations based on evolutionary models"/>
</dbReference>
<dbReference type="PhylomeDB" id="Q5H9R4"/>
<dbReference type="TreeFam" id="TF335652"/>
<dbReference type="PathwayCommons" id="Q5H9R4"/>
<dbReference type="SignaLink" id="Q5H9R4"/>
<dbReference type="BioGRID-ORCS" id="100131755">
    <property type="hits" value="14 hits in 763 CRISPR screens"/>
</dbReference>
<dbReference type="ChiTaRS" id="ARMCX4">
    <property type="organism name" value="human"/>
</dbReference>
<dbReference type="GenomeRNAi" id="100131755"/>
<dbReference type="Pharos" id="Q5H9R4">
    <property type="development level" value="Tdark"/>
</dbReference>
<dbReference type="PRO" id="PR:Q5H9R4"/>
<dbReference type="Proteomes" id="UP000005640">
    <property type="component" value="Chromosome X"/>
</dbReference>
<dbReference type="RNAct" id="Q5H9R4">
    <property type="molecule type" value="protein"/>
</dbReference>
<dbReference type="Bgee" id="ENSG00000196440">
    <property type="expression patterns" value="Expressed in left ovary and 166 other cell types or tissues"/>
</dbReference>
<dbReference type="ExpressionAtlas" id="Q5H9R4">
    <property type="expression patterns" value="baseline and differential"/>
</dbReference>
<dbReference type="GO" id="GO:0016020">
    <property type="term" value="C:membrane"/>
    <property type="evidence" value="ECO:0007669"/>
    <property type="project" value="UniProtKB-SubCell"/>
</dbReference>
<dbReference type="Gene3D" id="1.25.10.10">
    <property type="entry name" value="Leucine-rich Repeat Variant"/>
    <property type="match status" value="1"/>
</dbReference>
<dbReference type="InterPro" id="IPR011989">
    <property type="entry name" value="ARM-like"/>
</dbReference>
<dbReference type="InterPro" id="IPR006911">
    <property type="entry name" value="ARM-rpt_dom"/>
</dbReference>
<dbReference type="InterPro" id="IPR016024">
    <property type="entry name" value="ARM-type_fold"/>
</dbReference>
<dbReference type="InterPro" id="IPR000225">
    <property type="entry name" value="Armadillo"/>
</dbReference>
<dbReference type="PANTHER" id="PTHR47081">
    <property type="match status" value="1"/>
</dbReference>
<dbReference type="PANTHER" id="PTHR47081:SF1">
    <property type="entry name" value="ARMADILLO REPEAT-CONTAINING X-LINKED PROTEIN 4"/>
    <property type="match status" value="1"/>
</dbReference>
<dbReference type="Pfam" id="PF04826">
    <property type="entry name" value="Arm_2"/>
    <property type="match status" value="1"/>
</dbReference>
<dbReference type="SUPFAM" id="SSF48371">
    <property type="entry name" value="ARM repeat"/>
    <property type="match status" value="1"/>
</dbReference>
<dbReference type="PROSITE" id="PS50176">
    <property type="entry name" value="ARM_REPEAT"/>
    <property type="match status" value="1"/>
</dbReference>
<organism>
    <name type="scientific">Homo sapiens</name>
    <name type="common">Human</name>
    <dbReference type="NCBI Taxonomy" id="9606"/>
    <lineage>
        <taxon>Eukaryota</taxon>
        <taxon>Metazoa</taxon>
        <taxon>Chordata</taxon>
        <taxon>Craniata</taxon>
        <taxon>Vertebrata</taxon>
        <taxon>Euteleostomi</taxon>
        <taxon>Mammalia</taxon>
        <taxon>Eutheria</taxon>
        <taxon>Euarchontoglires</taxon>
        <taxon>Primates</taxon>
        <taxon>Haplorrhini</taxon>
        <taxon>Catarrhini</taxon>
        <taxon>Hominidae</taxon>
        <taxon>Homo</taxon>
    </lineage>
</organism>
<proteinExistence type="evidence at protein level"/>
<name>ARMX4_HUMAN</name>
<gene>
    <name type="primary">ARMCX4</name>
</gene>
<accession>Q5H9R4</accession>
<accession>A8K928</accession>
<accession>B3KXA4</accession>
<accession>F8W8Y7</accession>
<accession>Q5H9K8</accession>
<accession>Q8N8D6</accession>